<gene>
    <name type="primary">Vkorc1l1</name>
</gene>
<name>VKORL_RAT</name>
<sequence length="176" mass="19779">MAAPVLLRVSVPRWERVARYAVCAAGILLSIYAYHVEREKERDPEHRALCDLGPWVKCSAALASRWGRGFGLLGSIFGKDGVLNQPNSVFGLIFYILQLLLGMTASAVAALVLMTSSIVSVVGSLYLAYILYFVLKEFCIICVTTYVLNFLLLIINYKRLVYLNEAWKRQLQPKED</sequence>
<keyword id="KW-1015">Disulfide bond</keyword>
<keyword id="KW-0256">Endoplasmic reticulum</keyword>
<keyword id="KW-0472">Membrane</keyword>
<keyword id="KW-0560">Oxidoreductase</keyword>
<keyword id="KW-0874">Quinone</keyword>
<keyword id="KW-0676">Redox-active center</keyword>
<keyword id="KW-1185">Reference proteome</keyword>
<keyword id="KW-0812">Transmembrane</keyword>
<keyword id="KW-1133">Transmembrane helix</keyword>
<feature type="chain" id="PRO_0000191673" description="Vitamin K epoxide reductase complex subunit 1-like protein 1">
    <location>
        <begin position="1"/>
        <end position="176"/>
    </location>
</feature>
<feature type="topological domain" description="Cytoplasmic" evidence="1">
    <location>
        <begin position="1"/>
        <end position="13"/>
    </location>
</feature>
<feature type="transmembrane region" description="Helical" evidence="1">
    <location>
        <begin position="14"/>
        <end position="36"/>
    </location>
</feature>
<feature type="topological domain" description="Lumenal" evidence="1">
    <location>
        <begin position="37"/>
        <end position="87"/>
    </location>
</feature>
<feature type="transmembrane region" description="Helical" evidence="1">
    <location>
        <begin position="88"/>
        <end position="102"/>
    </location>
</feature>
<feature type="topological domain" description="Cytoplasmic" evidence="1">
    <location>
        <begin position="103"/>
        <end position="107"/>
    </location>
</feature>
<feature type="transmembrane region" description="Helical" evidence="1">
    <location>
        <begin position="108"/>
        <end position="135"/>
    </location>
</feature>
<feature type="topological domain" description="Lumenal" evidence="1">
    <location>
        <begin position="136"/>
        <end position="138"/>
    </location>
</feature>
<feature type="transmembrane region" description="Helical" evidence="1">
    <location>
        <begin position="139"/>
        <end position="160"/>
    </location>
</feature>
<feature type="topological domain" description="Cytoplasmic" evidence="1">
    <location>
        <begin position="161"/>
        <end position="176"/>
    </location>
</feature>
<feature type="binding site" evidence="1">
    <location>
        <position position="87"/>
    </location>
    <ligand>
        <name>(S)-warfarin</name>
        <dbReference type="ChEBI" id="CHEBI:87744"/>
    </ligand>
</feature>
<feature type="binding site" evidence="1">
    <location>
        <position position="142"/>
    </location>
    <ligand>
        <name>phylloquinone</name>
        <dbReference type="ChEBI" id="CHEBI:18067"/>
    </ligand>
</feature>
<feature type="binding site" evidence="1">
    <location>
        <position position="146"/>
    </location>
    <ligand>
        <name>(S)-warfarin</name>
        <dbReference type="ChEBI" id="CHEBI:87744"/>
    </ligand>
</feature>
<feature type="binding site" evidence="1">
    <location>
        <position position="146"/>
    </location>
    <ligand>
        <name>phylloquinone</name>
        <dbReference type="ChEBI" id="CHEBI:18067"/>
    </ligand>
</feature>
<feature type="disulfide bond" description="Redox-active" evidence="1">
    <location>
        <begin position="50"/>
        <end position="58"/>
    </location>
</feature>
<feature type="disulfide bond" description="Redox-active" evidence="1">
    <location>
        <begin position="139"/>
        <end position="142"/>
    </location>
</feature>
<organism>
    <name type="scientific">Rattus norvegicus</name>
    <name type="common">Rat</name>
    <dbReference type="NCBI Taxonomy" id="10116"/>
    <lineage>
        <taxon>Eukaryota</taxon>
        <taxon>Metazoa</taxon>
        <taxon>Chordata</taxon>
        <taxon>Craniata</taxon>
        <taxon>Vertebrata</taxon>
        <taxon>Euteleostomi</taxon>
        <taxon>Mammalia</taxon>
        <taxon>Eutheria</taxon>
        <taxon>Euarchontoglires</taxon>
        <taxon>Glires</taxon>
        <taxon>Rodentia</taxon>
        <taxon>Myomorpha</taxon>
        <taxon>Muroidea</taxon>
        <taxon>Muridae</taxon>
        <taxon>Murinae</taxon>
        <taxon>Rattus</taxon>
    </lineage>
</organism>
<comment type="function">
    <text evidence="2">Involved in vitamin K metabolism. Can reduce inactive vitamin K 2,3-epoxide to active vitamin K, and may contribute to vitamin K-mediated protection against oxidative stress. Plays a role in vitamin K-dependent gamma-carboxylation of Glu residues in target proteins.</text>
</comment>
<comment type="catalytic activity">
    <reaction evidence="2">
        <text>phylloquinone + [protein]-disulfide + H2O = 2,3-epoxyphylloquinone + [protein]-dithiol</text>
        <dbReference type="Rhea" id="RHEA:13817"/>
        <dbReference type="Rhea" id="RHEA-COMP:10593"/>
        <dbReference type="Rhea" id="RHEA-COMP:10594"/>
        <dbReference type="ChEBI" id="CHEBI:15377"/>
        <dbReference type="ChEBI" id="CHEBI:15759"/>
        <dbReference type="ChEBI" id="CHEBI:18067"/>
        <dbReference type="ChEBI" id="CHEBI:29950"/>
        <dbReference type="ChEBI" id="CHEBI:50058"/>
        <dbReference type="EC" id="1.17.4.4"/>
    </reaction>
</comment>
<comment type="catalytic activity">
    <reaction evidence="2">
        <text>phylloquinol + [protein]-disulfide = phylloquinone + [protein]-dithiol</text>
        <dbReference type="Rhea" id="RHEA:57744"/>
        <dbReference type="Rhea" id="RHEA-COMP:10593"/>
        <dbReference type="Rhea" id="RHEA-COMP:10594"/>
        <dbReference type="ChEBI" id="CHEBI:18067"/>
        <dbReference type="ChEBI" id="CHEBI:28433"/>
        <dbReference type="ChEBI" id="CHEBI:29950"/>
        <dbReference type="ChEBI" id="CHEBI:50058"/>
        <dbReference type="EC" id="1.17.4.4"/>
    </reaction>
</comment>
<comment type="activity regulation">
    <text evidence="1 2">Inhibited by warfarin (coumadin) (PubMed:23928358). Warfarin locks VKORC1 in both redox states into the closed conformation (By similarity).</text>
</comment>
<comment type="subcellular location">
    <subcellularLocation>
        <location evidence="4">Endoplasmic reticulum membrane</location>
        <topology evidence="4">Multi-pass membrane protein</topology>
    </subcellularLocation>
</comment>
<comment type="tissue specificity">
    <text evidence="2">Detected in lung, liver, testis, and at lower levels in kidney and brain.</text>
</comment>
<comment type="similarity">
    <text evidence="3">Belongs to the VKOR family.</text>
</comment>
<reference key="1">
    <citation type="journal article" date="2004" name="Nature">
        <title>Mutations in VKORC1 cause warfarin resistance and multiple coagulation factor deficiency type 2.</title>
        <authorList>
            <person name="Rost S."/>
            <person name="Fregin A."/>
            <person name="Ivaskevicius V."/>
            <person name="Conzelmann E."/>
            <person name="Hoertnagel K."/>
            <person name="Pelz H.-J."/>
            <person name="Lappegard K."/>
            <person name="Seifried E."/>
            <person name="Scharrer I."/>
            <person name="Tuddenham E.G.D."/>
            <person name="Mueller C.R."/>
            <person name="Strom T.M."/>
            <person name="Oldenburg J."/>
        </authorList>
    </citation>
    <scope>NUCLEOTIDE SEQUENCE [MRNA]</scope>
    <source>
        <strain>Sprague-Dawley</strain>
        <tissue>Liver</tissue>
    </source>
</reference>
<reference key="2">
    <citation type="journal article" date="2013" name="J. Biol. Chem.">
        <title>VKORC1L1, an enzyme rescuing the vitamin K 2,3-epoxide reductase activity in some extrahepatic tissues during anticoagulation therapy.</title>
        <authorList>
            <person name="Hammed A."/>
            <person name="Matagrin B."/>
            <person name="Spohn G."/>
            <person name="Prouillac C."/>
            <person name="Benoit E."/>
            <person name="Lattard V."/>
        </authorList>
    </citation>
    <scope>TISSUE SPECIFICITY</scope>
    <scope>FUNCTION</scope>
    <scope>CATALYTIC ACTIVITY</scope>
    <scope>ACTIVITY REGULATION</scope>
    <scope>SUBCELLULAR LOCATION</scope>
</reference>
<dbReference type="EC" id="1.17.4.4" evidence="2"/>
<dbReference type="EMBL" id="AY423048">
    <property type="protein sequence ID" value="AAR82918.1"/>
    <property type="molecule type" value="mRNA"/>
</dbReference>
<dbReference type="RefSeq" id="NP_976083.1">
    <property type="nucleotide sequence ID" value="NM_203338.1"/>
</dbReference>
<dbReference type="RefSeq" id="XP_008764222.1">
    <property type="nucleotide sequence ID" value="XM_008766000.2"/>
</dbReference>
<dbReference type="SMR" id="Q6TEK3"/>
<dbReference type="FunCoup" id="Q6TEK3">
    <property type="interactions" value="901"/>
</dbReference>
<dbReference type="STRING" id="10116.ENSRNOP00000024691"/>
<dbReference type="BindingDB" id="Q6TEK3"/>
<dbReference type="PhosphoSitePlus" id="Q6TEK3"/>
<dbReference type="jPOST" id="Q6TEK3"/>
<dbReference type="PaxDb" id="10116-ENSRNOP00000024691"/>
<dbReference type="GeneID" id="399684"/>
<dbReference type="KEGG" id="rno:399684"/>
<dbReference type="AGR" id="RGD:1303249"/>
<dbReference type="CTD" id="154807"/>
<dbReference type="RGD" id="1303249">
    <property type="gene designation" value="Vkorc1l1"/>
</dbReference>
<dbReference type="VEuPathDB" id="HostDB:ENSRNOG00000000901"/>
<dbReference type="eggNOG" id="ENOG502S4E7">
    <property type="taxonomic scope" value="Eukaryota"/>
</dbReference>
<dbReference type="HOGENOM" id="CLU_105471_0_0_1"/>
<dbReference type="InParanoid" id="Q6TEK3"/>
<dbReference type="OrthoDB" id="34819at9989"/>
<dbReference type="PhylomeDB" id="Q6TEK3"/>
<dbReference type="Reactome" id="R-RNO-6806664">
    <property type="pathway name" value="Metabolism of vitamin K"/>
</dbReference>
<dbReference type="PRO" id="PR:Q6TEK3"/>
<dbReference type="Proteomes" id="UP000002494">
    <property type="component" value="Chromosome 12"/>
</dbReference>
<dbReference type="Bgee" id="ENSRNOG00000018291">
    <property type="expression patterns" value="Expressed in frontal cortex and 2 other cell types or tissues"/>
</dbReference>
<dbReference type="GO" id="GO:0005789">
    <property type="term" value="C:endoplasmic reticulum membrane"/>
    <property type="evidence" value="ECO:0000250"/>
    <property type="project" value="UniProtKB"/>
</dbReference>
<dbReference type="GO" id="GO:0048038">
    <property type="term" value="F:quinone binding"/>
    <property type="evidence" value="ECO:0007669"/>
    <property type="project" value="UniProtKB-KW"/>
</dbReference>
<dbReference type="GO" id="GO:0047057">
    <property type="term" value="F:vitamin-K-epoxide reductase (warfarin-sensitive) activity"/>
    <property type="evidence" value="ECO:0000314"/>
    <property type="project" value="UniProtKB"/>
</dbReference>
<dbReference type="GO" id="GO:0034599">
    <property type="term" value="P:cellular response to oxidative stress"/>
    <property type="evidence" value="ECO:0000250"/>
    <property type="project" value="UniProtKB"/>
</dbReference>
<dbReference type="GO" id="GO:0017187">
    <property type="term" value="P:peptidyl-glutamic acid carboxylation"/>
    <property type="evidence" value="ECO:0000250"/>
    <property type="project" value="UniProtKB"/>
</dbReference>
<dbReference type="GO" id="GO:0042373">
    <property type="term" value="P:vitamin K metabolic process"/>
    <property type="evidence" value="ECO:0000314"/>
    <property type="project" value="UniProtKB"/>
</dbReference>
<dbReference type="CDD" id="cd12917">
    <property type="entry name" value="VKOR_euk"/>
    <property type="match status" value="1"/>
</dbReference>
<dbReference type="FunFam" id="1.20.1440.130:FF:000001">
    <property type="entry name" value="Vitamin K epoxide reductase complex subunit 1-like 1"/>
    <property type="match status" value="1"/>
</dbReference>
<dbReference type="Gene3D" id="1.20.1440.130">
    <property type="entry name" value="VKOR domain"/>
    <property type="match status" value="1"/>
</dbReference>
<dbReference type="InterPro" id="IPR012932">
    <property type="entry name" value="VKOR"/>
</dbReference>
<dbReference type="InterPro" id="IPR038354">
    <property type="entry name" value="VKOR_sf"/>
</dbReference>
<dbReference type="InterPro" id="IPR042406">
    <property type="entry name" value="VKORC1/VKORC1L1"/>
</dbReference>
<dbReference type="PANTHER" id="PTHR14519:SF5">
    <property type="entry name" value="VITAMIN K EPOXIDE REDUCTASE COMPLEX SUBUNIT 1-LIKE PROTEIN 1"/>
    <property type="match status" value="1"/>
</dbReference>
<dbReference type="PANTHER" id="PTHR14519">
    <property type="entry name" value="VITAMIN K EPOXIDE REDUCTASE COMPLEX, SUBUNIT 1"/>
    <property type="match status" value="1"/>
</dbReference>
<dbReference type="Pfam" id="PF07884">
    <property type="entry name" value="VKOR"/>
    <property type="match status" value="1"/>
</dbReference>
<dbReference type="SMART" id="SM00756">
    <property type="entry name" value="VKc"/>
    <property type="match status" value="1"/>
</dbReference>
<evidence type="ECO:0000250" key="1">
    <source>
        <dbReference type="UniProtKB" id="Q6TEK8"/>
    </source>
</evidence>
<evidence type="ECO:0000269" key="2">
    <source>
    </source>
</evidence>
<evidence type="ECO:0000305" key="3"/>
<evidence type="ECO:0000305" key="4">
    <source>
    </source>
</evidence>
<protein>
    <recommendedName>
        <fullName>Vitamin K epoxide reductase complex subunit 1-like protein 1</fullName>
        <shortName>VKORC1-like protein 1</shortName>
        <ecNumber evidence="2">1.17.4.4</ecNumber>
    </recommendedName>
</protein>
<proteinExistence type="evidence at protein level"/>
<accession>Q6TEK3</accession>